<evidence type="ECO:0000255" key="1">
    <source>
        <dbReference type="HAMAP-Rule" id="MF_01366"/>
    </source>
</evidence>
<evidence type="ECO:0000305" key="2"/>
<dbReference type="EMBL" id="CP000099">
    <property type="protein sequence ID" value="AAZ70386.1"/>
    <property type="molecule type" value="Genomic_DNA"/>
</dbReference>
<dbReference type="SMR" id="Q46CK6"/>
<dbReference type="STRING" id="269797.Mbar_A1427"/>
<dbReference type="PaxDb" id="269797-Mbar_A1427"/>
<dbReference type="KEGG" id="mba:Mbar_A1427"/>
<dbReference type="eggNOG" id="arCOG04242">
    <property type="taxonomic scope" value="Archaea"/>
</dbReference>
<dbReference type="HOGENOM" id="CLU_076922_1_0_2"/>
<dbReference type="OrthoDB" id="7668at2157"/>
<dbReference type="GO" id="GO:0022625">
    <property type="term" value="C:cytosolic large ribosomal subunit"/>
    <property type="evidence" value="ECO:0007669"/>
    <property type="project" value="TreeGrafter"/>
</dbReference>
<dbReference type="GO" id="GO:0003729">
    <property type="term" value="F:mRNA binding"/>
    <property type="evidence" value="ECO:0007669"/>
    <property type="project" value="TreeGrafter"/>
</dbReference>
<dbReference type="GO" id="GO:0003735">
    <property type="term" value="F:structural constituent of ribosome"/>
    <property type="evidence" value="ECO:0007669"/>
    <property type="project" value="InterPro"/>
</dbReference>
<dbReference type="GO" id="GO:0017148">
    <property type="term" value="P:negative regulation of translation"/>
    <property type="evidence" value="ECO:0007669"/>
    <property type="project" value="TreeGrafter"/>
</dbReference>
<dbReference type="GO" id="GO:0006412">
    <property type="term" value="P:translation"/>
    <property type="evidence" value="ECO:0007669"/>
    <property type="project" value="UniProtKB-UniRule"/>
</dbReference>
<dbReference type="CDD" id="cd00392">
    <property type="entry name" value="Ribosomal_L13"/>
    <property type="match status" value="1"/>
</dbReference>
<dbReference type="FunFam" id="3.90.1180.10:FF:000012">
    <property type="entry name" value="50S ribosomal protein L13"/>
    <property type="match status" value="1"/>
</dbReference>
<dbReference type="Gene3D" id="3.90.1180.10">
    <property type="entry name" value="Ribosomal protein L13"/>
    <property type="match status" value="1"/>
</dbReference>
<dbReference type="HAMAP" id="MF_01366">
    <property type="entry name" value="Ribosomal_uL13"/>
    <property type="match status" value="1"/>
</dbReference>
<dbReference type="InterPro" id="IPR005822">
    <property type="entry name" value="Ribosomal_uL13"/>
</dbReference>
<dbReference type="InterPro" id="IPR005823">
    <property type="entry name" value="Ribosomal_uL13_bac-type"/>
</dbReference>
<dbReference type="InterPro" id="IPR023563">
    <property type="entry name" value="Ribosomal_uL13_CS"/>
</dbReference>
<dbReference type="InterPro" id="IPR005755">
    <property type="entry name" value="Ribosomal_uL13_euk/arc"/>
</dbReference>
<dbReference type="InterPro" id="IPR036899">
    <property type="entry name" value="Ribosomal_uL13_sf"/>
</dbReference>
<dbReference type="NCBIfam" id="TIGR01077">
    <property type="entry name" value="L13_A_E"/>
    <property type="match status" value="1"/>
</dbReference>
<dbReference type="NCBIfam" id="NF005004">
    <property type="entry name" value="PRK06394.1"/>
    <property type="match status" value="1"/>
</dbReference>
<dbReference type="PANTHER" id="PTHR11545:SF3">
    <property type="entry name" value="LARGE RIBOSOMAL SUBUNIT PROTEIN UL13"/>
    <property type="match status" value="1"/>
</dbReference>
<dbReference type="PANTHER" id="PTHR11545">
    <property type="entry name" value="RIBOSOMAL PROTEIN L13"/>
    <property type="match status" value="1"/>
</dbReference>
<dbReference type="Pfam" id="PF00572">
    <property type="entry name" value="Ribosomal_L13"/>
    <property type="match status" value="1"/>
</dbReference>
<dbReference type="PIRSF" id="PIRSF002181">
    <property type="entry name" value="Ribosomal_L13"/>
    <property type="match status" value="1"/>
</dbReference>
<dbReference type="SUPFAM" id="SSF52161">
    <property type="entry name" value="Ribosomal protein L13"/>
    <property type="match status" value="1"/>
</dbReference>
<dbReference type="PROSITE" id="PS00783">
    <property type="entry name" value="RIBOSOMAL_L13"/>
    <property type="match status" value="1"/>
</dbReference>
<organism>
    <name type="scientific">Methanosarcina barkeri (strain Fusaro / DSM 804)</name>
    <dbReference type="NCBI Taxonomy" id="269797"/>
    <lineage>
        <taxon>Archaea</taxon>
        <taxon>Methanobacteriati</taxon>
        <taxon>Methanobacteriota</taxon>
        <taxon>Stenosarchaea group</taxon>
        <taxon>Methanomicrobia</taxon>
        <taxon>Methanosarcinales</taxon>
        <taxon>Methanosarcinaceae</taxon>
        <taxon>Methanosarcina</taxon>
    </lineage>
</organism>
<proteinExistence type="inferred from homology"/>
<protein>
    <recommendedName>
        <fullName evidence="1">Large ribosomal subunit protein uL13</fullName>
    </recommendedName>
    <alternativeName>
        <fullName evidence="2">50S ribosomal protein L13</fullName>
    </alternativeName>
</protein>
<sequence length="140" mass="15691">MTVIDANGLILGRLASTVAKQLLSGDEEIYIVNAEKAVISGSRATTLKEYRETRERGSTEFGPYFPKRPDRILKRTIRGMLPYKRARGRDAMSRLKVYVGVPTELKDTETITIADADMRLLSSSKYIELGEVSQKMGSKF</sequence>
<comment type="function">
    <text evidence="1">This protein is one of the early assembly proteins of the 50S ribosomal subunit, although it is not seen to bind rRNA by itself. It is important during the early stages of 50S assembly.</text>
</comment>
<comment type="subunit">
    <text evidence="1">Part of the 50S ribosomal subunit.</text>
</comment>
<comment type="similarity">
    <text evidence="1">Belongs to the universal ribosomal protein uL13 family.</text>
</comment>
<reference key="1">
    <citation type="journal article" date="2006" name="J. Bacteriol.">
        <title>The Methanosarcina barkeri genome: comparative analysis with Methanosarcina acetivorans and Methanosarcina mazei reveals extensive rearrangement within methanosarcinal genomes.</title>
        <authorList>
            <person name="Maeder D.L."/>
            <person name="Anderson I."/>
            <person name="Brettin T.S."/>
            <person name="Bruce D.C."/>
            <person name="Gilna P."/>
            <person name="Han C.S."/>
            <person name="Lapidus A."/>
            <person name="Metcalf W.W."/>
            <person name="Saunders E."/>
            <person name="Tapia R."/>
            <person name="Sowers K.R."/>
        </authorList>
    </citation>
    <scope>NUCLEOTIDE SEQUENCE [LARGE SCALE GENOMIC DNA]</scope>
    <source>
        <strain>Fusaro / DSM 804</strain>
    </source>
</reference>
<keyword id="KW-0687">Ribonucleoprotein</keyword>
<keyword id="KW-0689">Ribosomal protein</keyword>
<accession>Q46CK6</accession>
<feature type="chain" id="PRO_0000261841" description="Large ribosomal subunit protein uL13">
    <location>
        <begin position="1"/>
        <end position="140"/>
    </location>
</feature>
<name>RL13_METBF</name>
<gene>
    <name evidence="1" type="primary">rpl13</name>
    <name type="ordered locus">Mbar_A1427</name>
</gene>